<feature type="chain" id="PRO_0000375627" description="Succinyl-diaminopimelate desuccinylase">
    <location>
        <begin position="1"/>
        <end position="364"/>
    </location>
</feature>
<feature type="active site" evidence="1">
    <location>
        <position position="66"/>
    </location>
</feature>
<feature type="active site" description="Proton acceptor" evidence="1">
    <location>
        <position position="125"/>
    </location>
</feature>
<feature type="binding site" evidence="1">
    <location>
        <position position="64"/>
    </location>
    <ligand>
        <name>Zn(2+)</name>
        <dbReference type="ChEBI" id="CHEBI:29105"/>
        <label>1</label>
    </ligand>
</feature>
<feature type="binding site" evidence="1">
    <location>
        <position position="95"/>
    </location>
    <ligand>
        <name>Zn(2+)</name>
        <dbReference type="ChEBI" id="CHEBI:29105"/>
        <label>1</label>
    </ligand>
</feature>
<feature type="binding site" evidence="1">
    <location>
        <position position="95"/>
    </location>
    <ligand>
        <name>Zn(2+)</name>
        <dbReference type="ChEBI" id="CHEBI:29105"/>
        <label>2</label>
    </ligand>
</feature>
<feature type="binding site" evidence="1">
    <location>
        <position position="126"/>
    </location>
    <ligand>
        <name>Zn(2+)</name>
        <dbReference type="ChEBI" id="CHEBI:29105"/>
        <label>2</label>
    </ligand>
</feature>
<feature type="binding site" evidence="1">
    <location>
        <position position="154"/>
    </location>
    <ligand>
        <name>Zn(2+)</name>
        <dbReference type="ChEBI" id="CHEBI:29105"/>
        <label>1</label>
    </ligand>
</feature>
<feature type="binding site" evidence="1">
    <location>
        <position position="339"/>
    </location>
    <ligand>
        <name>Zn(2+)</name>
        <dbReference type="ChEBI" id="CHEBI:29105"/>
        <label>2</label>
    </ligand>
</feature>
<gene>
    <name evidence="1" type="primary">dapE</name>
    <name type="ordered locus">NIS_1237</name>
</gene>
<keyword id="KW-0028">Amino-acid biosynthesis</keyword>
<keyword id="KW-0170">Cobalt</keyword>
<keyword id="KW-0220">Diaminopimelate biosynthesis</keyword>
<keyword id="KW-0378">Hydrolase</keyword>
<keyword id="KW-0457">Lysine biosynthesis</keyword>
<keyword id="KW-0479">Metal-binding</keyword>
<keyword id="KW-1185">Reference proteome</keyword>
<keyword id="KW-0862">Zinc</keyword>
<name>DAPE_NITSB</name>
<accession>A6Q4D7</accession>
<proteinExistence type="inferred from homology"/>
<comment type="function">
    <text evidence="1">Catalyzes the hydrolysis of N-succinyl-L,L-diaminopimelic acid (SDAP), forming succinate and LL-2,6-diaminopimelate (DAP), an intermediate involved in the bacterial biosynthesis of lysine and meso-diaminopimelic acid, an essential component of bacterial cell walls.</text>
</comment>
<comment type="catalytic activity">
    <reaction evidence="1">
        <text>N-succinyl-(2S,6S)-2,6-diaminopimelate + H2O = (2S,6S)-2,6-diaminopimelate + succinate</text>
        <dbReference type="Rhea" id="RHEA:22608"/>
        <dbReference type="ChEBI" id="CHEBI:15377"/>
        <dbReference type="ChEBI" id="CHEBI:30031"/>
        <dbReference type="ChEBI" id="CHEBI:57609"/>
        <dbReference type="ChEBI" id="CHEBI:58087"/>
        <dbReference type="EC" id="3.5.1.18"/>
    </reaction>
</comment>
<comment type="cofactor">
    <cofactor evidence="1">
        <name>Zn(2+)</name>
        <dbReference type="ChEBI" id="CHEBI:29105"/>
    </cofactor>
    <cofactor evidence="1">
        <name>Co(2+)</name>
        <dbReference type="ChEBI" id="CHEBI:48828"/>
    </cofactor>
    <text evidence="1">Binds 2 Zn(2+) or Co(2+) ions per subunit.</text>
</comment>
<comment type="pathway">
    <text evidence="1">Amino-acid biosynthesis; L-lysine biosynthesis via DAP pathway; LL-2,6-diaminopimelate from (S)-tetrahydrodipicolinate (succinylase route): step 3/3.</text>
</comment>
<comment type="subunit">
    <text evidence="1">Homodimer.</text>
</comment>
<comment type="similarity">
    <text evidence="1">Belongs to the peptidase M20A family. DapE subfamily.</text>
</comment>
<evidence type="ECO:0000255" key="1">
    <source>
        <dbReference type="HAMAP-Rule" id="MF_01690"/>
    </source>
</evidence>
<dbReference type="EC" id="3.5.1.18" evidence="1"/>
<dbReference type="EMBL" id="AP009178">
    <property type="protein sequence ID" value="BAF70346.1"/>
    <property type="molecule type" value="Genomic_DNA"/>
</dbReference>
<dbReference type="RefSeq" id="WP_012082609.1">
    <property type="nucleotide sequence ID" value="NC_009662.1"/>
</dbReference>
<dbReference type="SMR" id="A6Q4D7"/>
<dbReference type="FunCoup" id="A6Q4D7">
    <property type="interactions" value="338"/>
</dbReference>
<dbReference type="STRING" id="387092.NIS_1237"/>
<dbReference type="KEGG" id="nis:NIS_1237"/>
<dbReference type="eggNOG" id="COG0624">
    <property type="taxonomic scope" value="Bacteria"/>
</dbReference>
<dbReference type="HOGENOM" id="CLU_021802_4_0_7"/>
<dbReference type="InParanoid" id="A6Q4D7"/>
<dbReference type="OrthoDB" id="5486471at2"/>
<dbReference type="UniPathway" id="UPA00034">
    <property type="reaction ID" value="UER00021"/>
</dbReference>
<dbReference type="Proteomes" id="UP000001118">
    <property type="component" value="Chromosome"/>
</dbReference>
<dbReference type="GO" id="GO:0008777">
    <property type="term" value="F:acetylornithine deacetylase activity"/>
    <property type="evidence" value="ECO:0007669"/>
    <property type="project" value="TreeGrafter"/>
</dbReference>
<dbReference type="GO" id="GO:0046872">
    <property type="term" value="F:metal ion binding"/>
    <property type="evidence" value="ECO:0007669"/>
    <property type="project" value="UniProtKB-KW"/>
</dbReference>
<dbReference type="GO" id="GO:0009014">
    <property type="term" value="F:succinyl-diaminopimelate desuccinylase activity"/>
    <property type="evidence" value="ECO:0007669"/>
    <property type="project" value="UniProtKB-EC"/>
</dbReference>
<dbReference type="GO" id="GO:0019877">
    <property type="term" value="P:diaminopimelate biosynthetic process"/>
    <property type="evidence" value="ECO:0007669"/>
    <property type="project" value="UniProtKB-KW"/>
</dbReference>
<dbReference type="GO" id="GO:0006526">
    <property type="term" value="P:L-arginine biosynthetic process"/>
    <property type="evidence" value="ECO:0007669"/>
    <property type="project" value="TreeGrafter"/>
</dbReference>
<dbReference type="GO" id="GO:0009089">
    <property type="term" value="P:lysine biosynthetic process via diaminopimelate"/>
    <property type="evidence" value="ECO:0007669"/>
    <property type="project" value="UniProtKB-UniPathway"/>
</dbReference>
<dbReference type="CDD" id="cd03891">
    <property type="entry name" value="M20_DapE_proteobac"/>
    <property type="match status" value="1"/>
</dbReference>
<dbReference type="Gene3D" id="3.30.70.360">
    <property type="match status" value="1"/>
</dbReference>
<dbReference type="Gene3D" id="3.40.630.10">
    <property type="entry name" value="Zn peptidases"/>
    <property type="match status" value="2"/>
</dbReference>
<dbReference type="HAMAP" id="MF_01690">
    <property type="entry name" value="DapE"/>
    <property type="match status" value="1"/>
</dbReference>
<dbReference type="InterPro" id="IPR001261">
    <property type="entry name" value="ArgE/DapE_CS"/>
</dbReference>
<dbReference type="InterPro" id="IPR036264">
    <property type="entry name" value="Bact_exopeptidase_dim_dom"/>
</dbReference>
<dbReference type="InterPro" id="IPR005941">
    <property type="entry name" value="DapE_proteobac"/>
</dbReference>
<dbReference type="InterPro" id="IPR002933">
    <property type="entry name" value="Peptidase_M20"/>
</dbReference>
<dbReference type="InterPro" id="IPR011650">
    <property type="entry name" value="Peptidase_M20_dimer"/>
</dbReference>
<dbReference type="InterPro" id="IPR050072">
    <property type="entry name" value="Peptidase_M20A"/>
</dbReference>
<dbReference type="NCBIfam" id="TIGR01246">
    <property type="entry name" value="dapE_proteo"/>
    <property type="match status" value="1"/>
</dbReference>
<dbReference type="NCBIfam" id="NF009557">
    <property type="entry name" value="PRK13009.1"/>
    <property type="match status" value="1"/>
</dbReference>
<dbReference type="PANTHER" id="PTHR43808">
    <property type="entry name" value="ACETYLORNITHINE DEACETYLASE"/>
    <property type="match status" value="1"/>
</dbReference>
<dbReference type="PANTHER" id="PTHR43808:SF31">
    <property type="entry name" value="N-ACETYL-L-CITRULLINE DEACETYLASE"/>
    <property type="match status" value="1"/>
</dbReference>
<dbReference type="Pfam" id="PF07687">
    <property type="entry name" value="M20_dimer"/>
    <property type="match status" value="1"/>
</dbReference>
<dbReference type="Pfam" id="PF01546">
    <property type="entry name" value="Peptidase_M20"/>
    <property type="match status" value="1"/>
</dbReference>
<dbReference type="SUPFAM" id="SSF55031">
    <property type="entry name" value="Bacterial exopeptidase dimerisation domain"/>
    <property type="match status" value="1"/>
</dbReference>
<dbReference type="SUPFAM" id="SSF53187">
    <property type="entry name" value="Zn-dependent exopeptidases"/>
    <property type="match status" value="1"/>
</dbReference>
<dbReference type="PROSITE" id="PS00759">
    <property type="entry name" value="ARGE_DAPE_CPG2_2"/>
    <property type="match status" value="1"/>
</dbReference>
<protein>
    <recommendedName>
        <fullName evidence="1">Succinyl-diaminopimelate desuccinylase</fullName>
        <shortName evidence="1">SDAP desuccinylase</shortName>
        <ecNumber evidence="1">3.5.1.18</ecNumber>
    </recommendedName>
    <alternativeName>
        <fullName evidence="1">N-succinyl-LL-2,6-diaminoheptanedioate amidohydrolase</fullName>
    </alternativeName>
</protein>
<reference key="1">
    <citation type="journal article" date="2007" name="Proc. Natl. Acad. Sci. U.S.A.">
        <title>Deep-sea vent epsilon-proteobacterial genomes provide insights into emergence of pathogens.</title>
        <authorList>
            <person name="Nakagawa S."/>
            <person name="Takaki Y."/>
            <person name="Shimamura S."/>
            <person name="Reysenbach A.-L."/>
            <person name="Takai K."/>
            <person name="Horikoshi K."/>
        </authorList>
    </citation>
    <scope>NUCLEOTIDE SEQUENCE [LARGE SCALE GENOMIC DNA]</scope>
    <source>
        <strain>SB155-2</strain>
    </source>
</reference>
<sequence>MEVIDLFKKLLSFPSITPDDAGSLEFIREYLSDFHALWFNKHGVKNLFLYKKFGEGEHLCFAGHVDVVPPGDGWESDPFEPLEKDGFIYARGAQDMKSGVAAFVQAVKEAKVFHGTLSLLLTSDEEGEAKWGTKYALEELERMHMTPQYAIVAEPTCEERFGDAIKIGRRGSINGVIEKIGKQGHAAYPEKAVNPIHKVAQVLPKMAGVDLDSGDEYFAPSKFVITDIRAGMEVTNVTPGRLKMMFNVRNNTKTTMQDVERFVHRYFDGMNYTLKLSQSAKPFLTDPNSKVVQVIDQAIKKMTGITPKHSTAGGTSDARFFAEYGVKTIEFGVKNDTIHAPNERTSKEEVEKLYLVFKEVIRSF</sequence>
<organism>
    <name type="scientific">Nitratiruptor sp. (strain SB155-2)</name>
    <dbReference type="NCBI Taxonomy" id="387092"/>
    <lineage>
        <taxon>Bacteria</taxon>
        <taxon>Pseudomonadati</taxon>
        <taxon>Campylobacterota</taxon>
        <taxon>Epsilonproteobacteria</taxon>
        <taxon>Nautiliales</taxon>
        <taxon>Nitratiruptoraceae</taxon>
        <taxon>Nitratiruptor</taxon>
    </lineage>
</organism>